<gene>
    <name evidence="1" type="primary">purL</name>
    <name type="ordered locus">NATL1_00021</name>
</gene>
<sequence length="803" mass="87742">MTVSFENKDFNQFINSSKFLVEYDVMSALKQEGLKQSDYVEICRRLNRGPNRNELGMFGVMWSEHCCYRNSRPLLKNLPTTGSRILVGPGENAGVVDIGFGQRLVFKIESHNHPSAVEPFQGAATGVGGILRDIFTMGARPIALLNALRFGPLDDEKNISLLEGVVAGISHYGNCVGVPTIGGEVGFDSSYSGNPLVNVMGLGLMETEEIVCSGASGIDFPVLYVGNTTGRDGMGGASFASSELSKTSIDDRPAVQVGDPFLEKGLIEACLEAFKTGYVIAAQDMGAAGLTCSCSEMASKGEVGIELNLDLVPAREKGMTAYEFLLSESQERMLFVVKPGSEEELRELFIRWGLYVEVVGKVLKEKVVRVIHKGEVVANLPASALADDTPIEEHLLINSTPEYLQEHWKWTEDLLPKTLDNGIINIKNNLFISWNNVLLDLLSMPSIASKNWIYKQYDYQVQSNTVVSPGEADAAVIRIRSQNDFLTKPKKDRGIASVVDCNDRWVYLDPLRGSMSAVAEAARNLSSVGAEPIAITNNLNFSSPDKPVGFWQLSMSCEGITKACLALSTPVTGGNVSLYNDTKLQNNTVLPIHPTPVIGMVGLIEDINKICKKSWVKAEDQIWMIGLPLENNINQDERISLSASSFLEYIHGLKTGRPPEIDLNLEKQVHAFLREVIKQGIVNSAHDLGDGGLAVAIAECCISSGYGANIILPPSQSRLDRLLFAEGGARVLVSCSTDQSEELKKYYKNISLQGSNLFSISHLGNVNNQKKLLVSQSNNTIIDVNILDLKDTYKDAIHKKITK</sequence>
<protein>
    <recommendedName>
        <fullName evidence="1">Phosphoribosylformylglycinamidine synthase subunit PurL</fullName>
        <shortName evidence="1">FGAM synthase</shortName>
        <ecNumber evidence="1">6.3.5.3</ecNumber>
    </recommendedName>
    <alternativeName>
        <fullName evidence="1">Formylglycinamide ribonucleotide amidotransferase subunit II</fullName>
        <shortName evidence="1">FGAR amidotransferase II</shortName>
        <shortName evidence="1">FGAR-AT II</shortName>
    </alternativeName>
    <alternativeName>
        <fullName evidence="1">Glutamine amidotransferase PurL</fullName>
    </alternativeName>
    <alternativeName>
        <fullName evidence="1">Phosphoribosylformylglycinamidine synthase subunit II</fullName>
    </alternativeName>
</protein>
<reference key="1">
    <citation type="journal article" date="2007" name="PLoS Genet.">
        <title>Patterns and implications of gene gain and loss in the evolution of Prochlorococcus.</title>
        <authorList>
            <person name="Kettler G.C."/>
            <person name="Martiny A.C."/>
            <person name="Huang K."/>
            <person name="Zucker J."/>
            <person name="Coleman M.L."/>
            <person name="Rodrigue S."/>
            <person name="Chen F."/>
            <person name="Lapidus A."/>
            <person name="Ferriera S."/>
            <person name="Johnson J."/>
            <person name="Steglich C."/>
            <person name="Church G.M."/>
            <person name="Richardson P."/>
            <person name="Chisholm S.W."/>
        </authorList>
    </citation>
    <scope>NUCLEOTIDE SEQUENCE [LARGE SCALE GENOMIC DNA]</scope>
    <source>
        <strain>NATL1A</strain>
    </source>
</reference>
<name>PURL_PROM1</name>
<organism>
    <name type="scientific">Prochlorococcus marinus (strain NATL1A)</name>
    <dbReference type="NCBI Taxonomy" id="167555"/>
    <lineage>
        <taxon>Bacteria</taxon>
        <taxon>Bacillati</taxon>
        <taxon>Cyanobacteriota</taxon>
        <taxon>Cyanophyceae</taxon>
        <taxon>Synechococcales</taxon>
        <taxon>Prochlorococcaceae</taxon>
        <taxon>Prochlorococcus</taxon>
    </lineage>
</organism>
<accession>A2BZA6</accession>
<evidence type="ECO:0000255" key="1">
    <source>
        <dbReference type="HAMAP-Rule" id="MF_00420"/>
    </source>
</evidence>
<comment type="function">
    <text evidence="1">Part of the phosphoribosylformylglycinamidine synthase complex involved in the purines biosynthetic pathway. Catalyzes the ATP-dependent conversion of formylglycinamide ribonucleotide (FGAR) and glutamine to yield formylglycinamidine ribonucleotide (FGAM) and glutamate. The FGAM synthase complex is composed of three subunits. PurQ produces an ammonia molecule by converting glutamine to glutamate. PurL transfers the ammonia molecule to FGAR to form FGAM in an ATP-dependent manner. PurS interacts with PurQ and PurL and is thought to assist in the transfer of the ammonia molecule from PurQ to PurL.</text>
</comment>
<comment type="catalytic activity">
    <reaction evidence="1">
        <text>N(2)-formyl-N(1)-(5-phospho-beta-D-ribosyl)glycinamide + L-glutamine + ATP + H2O = 2-formamido-N(1)-(5-O-phospho-beta-D-ribosyl)acetamidine + L-glutamate + ADP + phosphate + H(+)</text>
        <dbReference type="Rhea" id="RHEA:17129"/>
        <dbReference type="ChEBI" id="CHEBI:15377"/>
        <dbReference type="ChEBI" id="CHEBI:15378"/>
        <dbReference type="ChEBI" id="CHEBI:29985"/>
        <dbReference type="ChEBI" id="CHEBI:30616"/>
        <dbReference type="ChEBI" id="CHEBI:43474"/>
        <dbReference type="ChEBI" id="CHEBI:58359"/>
        <dbReference type="ChEBI" id="CHEBI:147286"/>
        <dbReference type="ChEBI" id="CHEBI:147287"/>
        <dbReference type="ChEBI" id="CHEBI:456216"/>
        <dbReference type="EC" id="6.3.5.3"/>
    </reaction>
</comment>
<comment type="pathway">
    <text evidence="1">Purine metabolism; IMP biosynthesis via de novo pathway; 5-amino-1-(5-phospho-D-ribosyl)imidazole from N(2)-formyl-N(1)-(5-phospho-D-ribosyl)glycinamide: step 1/2.</text>
</comment>
<comment type="subunit">
    <text evidence="1">Monomer. Part of the FGAM synthase complex composed of 1 PurL, 1 PurQ and 2 PurS subunits.</text>
</comment>
<comment type="subcellular location">
    <subcellularLocation>
        <location evidence="1">Cytoplasm</location>
    </subcellularLocation>
</comment>
<comment type="similarity">
    <text evidence="1">Belongs to the FGAMS family.</text>
</comment>
<proteinExistence type="inferred from homology"/>
<dbReference type="EC" id="6.3.5.3" evidence="1"/>
<dbReference type="EMBL" id="CP000553">
    <property type="protein sequence ID" value="ABM74566.1"/>
    <property type="molecule type" value="Genomic_DNA"/>
</dbReference>
<dbReference type="RefSeq" id="WP_011822804.1">
    <property type="nucleotide sequence ID" value="NC_008819.1"/>
</dbReference>
<dbReference type="SMR" id="A2BZA6"/>
<dbReference type="KEGG" id="pme:NATL1_00021"/>
<dbReference type="eggNOG" id="COG0046">
    <property type="taxonomic scope" value="Bacteria"/>
</dbReference>
<dbReference type="HOGENOM" id="CLU_003100_0_1_3"/>
<dbReference type="UniPathway" id="UPA00074">
    <property type="reaction ID" value="UER00128"/>
</dbReference>
<dbReference type="Proteomes" id="UP000002592">
    <property type="component" value="Chromosome"/>
</dbReference>
<dbReference type="GO" id="GO:0005737">
    <property type="term" value="C:cytoplasm"/>
    <property type="evidence" value="ECO:0007669"/>
    <property type="project" value="UniProtKB-SubCell"/>
</dbReference>
<dbReference type="GO" id="GO:0005524">
    <property type="term" value="F:ATP binding"/>
    <property type="evidence" value="ECO:0007669"/>
    <property type="project" value="UniProtKB-UniRule"/>
</dbReference>
<dbReference type="GO" id="GO:0000287">
    <property type="term" value="F:magnesium ion binding"/>
    <property type="evidence" value="ECO:0007669"/>
    <property type="project" value="UniProtKB-UniRule"/>
</dbReference>
<dbReference type="GO" id="GO:0004642">
    <property type="term" value="F:phosphoribosylformylglycinamidine synthase activity"/>
    <property type="evidence" value="ECO:0007669"/>
    <property type="project" value="UniProtKB-UniRule"/>
</dbReference>
<dbReference type="GO" id="GO:0006189">
    <property type="term" value="P:'de novo' IMP biosynthetic process"/>
    <property type="evidence" value="ECO:0007669"/>
    <property type="project" value="UniProtKB-UniRule"/>
</dbReference>
<dbReference type="CDD" id="cd02203">
    <property type="entry name" value="PurL_repeat1"/>
    <property type="match status" value="1"/>
</dbReference>
<dbReference type="CDD" id="cd02204">
    <property type="entry name" value="PurL_repeat2"/>
    <property type="match status" value="1"/>
</dbReference>
<dbReference type="FunFam" id="3.30.1330.10:FF:000004">
    <property type="entry name" value="Phosphoribosylformylglycinamidine synthase subunit PurL"/>
    <property type="match status" value="1"/>
</dbReference>
<dbReference type="Gene3D" id="3.90.650.10">
    <property type="entry name" value="PurM-like C-terminal domain"/>
    <property type="match status" value="2"/>
</dbReference>
<dbReference type="Gene3D" id="3.30.1330.10">
    <property type="entry name" value="PurM-like, N-terminal domain"/>
    <property type="match status" value="2"/>
</dbReference>
<dbReference type="HAMAP" id="MF_00420">
    <property type="entry name" value="PurL_2"/>
    <property type="match status" value="1"/>
</dbReference>
<dbReference type="InterPro" id="IPR010074">
    <property type="entry name" value="PRibForGlyAmidine_synth_PurL"/>
</dbReference>
<dbReference type="InterPro" id="IPR041609">
    <property type="entry name" value="PurL_linker"/>
</dbReference>
<dbReference type="InterPro" id="IPR010918">
    <property type="entry name" value="PurM-like_C_dom"/>
</dbReference>
<dbReference type="InterPro" id="IPR036676">
    <property type="entry name" value="PurM-like_C_sf"/>
</dbReference>
<dbReference type="InterPro" id="IPR016188">
    <property type="entry name" value="PurM-like_N"/>
</dbReference>
<dbReference type="InterPro" id="IPR036921">
    <property type="entry name" value="PurM-like_N_sf"/>
</dbReference>
<dbReference type="NCBIfam" id="TIGR01736">
    <property type="entry name" value="FGAM_synth_II"/>
    <property type="match status" value="1"/>
</dbReference>
<dbReference type="NCBIfam" id="NF002290">
    <property type="entry name" value="PRK01213.1"/>
    <property type="match status" value="1"/>
</dbReference>
<dbReference type="PANTHER" id="PTHR43555">
    <property type="entry name" value="PHOSPHORIBOSYLFORMYLGLYCINAMIDINE SYNTHASE SUBUNIT PURL"/>
    <property type="match status" value="1"/>
</dbReference>
<dbReference type="PANTHER" id="PTHR43555:SF1">
    <property type="entry name" value="PHOSPHORIBOSYLFORMYLGLYCINAMIDINE SYNTHASE SUBUNIT PURL"/>
    <property type="match status" value="1"/>
</dbReference>
<dbReference type="Pfam" id="PF00586">
    <property type="entry name" value="AIRS"/>
    <property type="match status" value="2"/>
</dbReference>
<dbReference type="Pfam" id="PF02769">
    <property type="entry name" value="AIRS_C"/>
    <property type="match status" value="2"/>
</dbReference>
<dbReference type="Pfam" id="PF18072">
    <property type="entry name" value="FGAR-AT_linker"/>
    <property type="match status" value="1"/>
</dbReference>
<dbReference type="PIRSF" id="PIRSF001587">
    <property type="entry name" value="FGAM_synthase_II"/>
    <property type="match status" value="1"/>
</dbReference>
<dbReference type="SUPFAM" id="SSF56042">
    <property type="entry name" value="PurM C-terminal domain-like"/>
    <property type="match status" value="2"/>
</dbReference>
<dbReference type="SUPFAM" id="SSF55326">
    <property type="entry name" value="PurM N-terminal domain-like"/>
    <property type="match status" value="2"/>
</dbReference>
<keyword id="KW-0067">ATP-binding</keyword>
<keyword id="KW-0963">Cytoplasm</keyword>
<keyword id="KW-0436">Ligase</keyword>
<keyword id="KW-0460">Magnesium</keyword>
<keyword id="KW-0479">Metal-binding</keyword>
<keyword id="KW-0547">Nucleotide-binding</keyword>
<keyword id="KW-0658">Purine biosynthesis</keyword>
<feature type="chain" id="PRO_1000050333" description="Phosphoribosylformylglycinamidine synthase subunit PurL">
    <location>
        <begin position="1"/>
        <end position="803"/>
    </location>
</feature>
<feature type="active site" evidence="1">
    <location>
        <position position="65"/>
    </location>
</feature>
<feature type="active site" description="Proton acceptor" evidence="1">
    <location>
        <position position="111"/>
    </location>
</feature>
<feature type="binding site" evidence="1">
    <location>
        <position position="68"/>
    </location>
    <ligand>
        <name>ATP</name>
        <dbReference type="ChEBI" id="CHEBI:30616"/>
    </ligand>
</feature>
<feature type="binding site" evidence="1">
    <location>
        <position position="107"/>
    </location>
    <ligand>
        <name>ATP</name>
        <dbReference type="ChEBI" id="CHEBI:30616"/>
    </ligand>
</feature>
<feature type="binding site" evidence="1">
    <location>
        <position position="109"/>
    </location>
    <ligand>
        <name>Mg(2+)</name>
        <dbReference type="ChEBI" id="CHEBI:18420"/>
        <label>1</label>
    </ligand>
</feature>
<feature type="binding site" evidence="1">
    <location>
        <begin position="110"/>
        <end position="113"/>
    </location>
    <ligand>
        <name>substrate</name>
    </ligand>
</feature>
<feature type="binding site" evidence="1">
    <location>
        <position position="132"/>
    </location>
    <ligand>
        <name>substrate</name>
    </ligand>
</feature>
<feature type="binding site" evidence="1">
    <location>
        <position position="133"/>
    </location>
    <ligand>
        <name>Mg(2+)</name>
        <dbReference type="ChEBI" id="CHEBI:18420"/>
        <label>2</label>
    </ligand>
</feature>
<feature type="binding site" evidence="1">
    <location>
        <position position="256"/>
    </location>
    <ligand>
        <name>substrate</name>
    </ligand>
</feature>
<feature type="binding site" evidence="1">
    <location>
        <position position="284"/>
    </location>
    <ligand>
        <name>Mg(2+)</name>
        <dbReference type="ChEBI" id="CHEBI:18420"/>
        <label>2</label>
    </ligand>
</feature>
<feature type="binding site" evidence="1">
    <location>
        <begin position="328"/>
        <end position="330"/>
    </location>
    <ligand>
        <name>substrate</name>
    </ligand>
</feature>
<feature type="binding site" evidence="1">
    <location>
        <position position="537"/>
    </location>
    <ligand>
        <name>ATP</name>
        <dbReference type="ChEBI" id="CHEBI:30616"/>
    </ligand>
</feature>
<feature type="binding site" evidence="1">
    <location>
        <position position="574"/>
    </location>
    <ligand>
        <name>ATP</name>
        <dbReference type="ChEBI" id="CHEBI:30616"/>
    </ligand>
</feature>
<feature type="binding site" evidence="1">
    <location>
        <position position="575"/>
    </location>
    <ligand>
        <name>Mg(2+)</name>
        <dbReference type="ChEBI" id="CHEBI:18420"/>
        <label>1</label>
    </ligand>
</feature>
<feature type="binding site" evidence="1">
    <location>
        <position position="577"/>
    </location>
    <ligand>
        <name>substrate</name>
    </ligand>
</feature>